<dbReference type="EC" id="6.1.1.3" evidence="1"/>
<dbReference type="EMBL" id="CP001340">
    <property type="protein sequence ID" value="ACL93961.1"/>
    <property type="molecule type" value="Genomic_DNA"/>
</dbReference>
<dbReference type="RefSeq" id="WP_010918352.1">
    <property type="nucleotide sequence ID" value="NC_011916.1"/>
</dbReference>
<dbReference type="RefSeq" id="YP_002515869.1">
    <property type="nucleotide sequence ID" value="NC_011916.1"/>
</dbReference>
<dbReference type="SMR" id="B8GZS7"/>
<dbReference type="GeneID" id="7332186"/>
<dbReference type="KEGG" id="ccs:CCNA_00496"/>
<dbReference type="PATRIC" id="fig|565050.3.peg.487"/>
<dbReference type="HOGENOM" id="CLU_008554_0_1_5"/>
<dbReference type="OrthoDB" id="9802304at2"/>
<dbReference type="PhylomeDB" id="B8GZS7"/>
<dbReference type="Proteomes" id="UP000001364">
    <property type="component" value="Chromosome"/>
</dbReference>
<dbReference type="GO" id="GO:0005737">
    <property type="term" value="C:cytoplasm"/>
    <property type="evidence" value="ECO:0007669"/>
    <property type="project" value="UniProtKB-SubCell"/>
</dbReference>
<dbReference type="GO" id="GO:0005524">
    <property type="term" value="F:ATP binding"/>
    <property type="evidence" value="ECO:0007669"/>
    <property type="project" value="UniProtKB-UniRule"/>
</dbReference>
<dbReference type="GO" id="GO:0046872">
    <property type="term" value="F:metal ion binding"/>
    <property type="evidence" value="ECO:0007669"/>
    <property type="project" value="UniProtKB-KW"/>
</dbReference>
<dbReference type="GO" id="GO:0004829">
    <property type="term" value="F:threonine-tRNA ligase activity"/>
    <property type="evidence" value="ECO:0007669"/>
    <property type="project" value="UniProtKB-UniRule"/>
</dbReference>
<dbReference type="GO" id="GO:0000049">
    <property type="term" value="F:tRNA binding"/>
    <property type="evidence" value="ECO:0007669"/>
    <property type="project" value="UniProtKB-KW"/>
</dbReference>
<dbReference type="GO" id="GO:0006435">
    <property type="term" value="P:threonyl-tRNA aminoacylation"/>
    <property type="evidence" value="ECO:0007669"/>
    <property type="project" value="UniProtKB-UniRule"/>
</dbReference>
<dbReference type="CDD" id="cd01667">
    <property type="entry name" value="TGS_ThrRS"/>
    <property type="match status" value="1"/>
</dbReference>
<dbReference type="CDD" id="cd00860">
    <property type="entry name" value="ThrRS_anticodon"/>
    <property type="match status" value="1"/>
</dbReference>
<dbReference type="CDD" id="cd00771">
    <property type="entry name" value="ThrRS_core"/>
    <property type="match status" value="1"/>
</dbReference>
<dbReference type="FunFam" id="3.30.54.20:FF:000002">
    <property type="entry name" value="Threonine--tRNA ligase"/>
    <property type="match status" value="1"/>
</dbReference>
<dbReference type="FunFam" id="3.30.930.10:FF:000002">
    <property type="entry name" value="Threonine--tRNA ligase"/>
    <property type="match status" value="1"/>
</dbReference>
<dbReference type="FunFam" id="3.40.50.800:FF:000001">
    <property type="entry name" value="Threonine--tRNA ligase"/>
    <property type="match status" value="1"/>
</dbReference>
<dbReference type="FunFam" id="3.30.980.10:FF:000005">
    <property type="entry name" value="Threonyl-tRNA synthetase, mitochondrial"/>
    <property type="match status" value="1"/>
</dbReference>
<dbReference type="Gene3D" id="3.10.20.30">
    <property type="match status" value="1"/>
</dbReference>
<dbReference type="Gene3D" id="3.30.54.20">
    <property type="match status" value="1"/>
</dbReference>
<dbReference type="Gene3D" id="3.40.50.800">
    <property type="entry name" value="Anticodon-binding domain"/>
    <property type="match status" value="1"/>
</dbReference>
<dbReference type="Gene3D" id="3.30.930.10">
    <property type="entry name" value="Bira Bifunctional Protein, Domain 2"/>
    <property type="match status" value="1"/>
</dbReference>
<dbReference type="Gene3D" id="3.30.980.10">
    <property type="entry name" value="Threonyl-trna Synthetase, Chain A, domain 2"/>
    <property type="match status" value="1"/>
</dbReference>
<dbReference type="HAMAP" id="MF_00184">
    <property type="entry name" value="Thr_tRNA_synth"/>
    <property type="match status" value="1"/>
</dbReference>
<dbReference type="InterPro" id="IPR002314">
    <property type="entry name" value="aa-tRNA-synt_IIb"/>
</dbReference>
<dbReference type="InterPro" id="IPR006195">
    <property type="entry name" value="aa-tRNA-synth_II"/>
</dbReference>
<dbReference type="InterPro" id="IPR045864">
    <property type="entry name" value="aa-tRNA-synth_II/BPL/LPL"/>
</dbReference>
<dbReference type="InterPro" id="IPR004154">
    <property type="entry name" value="Anticodon-bd"/>
</dbReference>
<dbReference type="InterPro" id="IPR036621">
    <property type="entry name" value="Anticodon-bd_dom_sf"/>
</dbReference>
<dbReference type="InterPro" id="IPR012675">
    <property type="entry name" value="Beta-grasp_dom_sf"/>
</dbReference>
<dbReference type="InterPro" id="IPR004095">
    <property type="entry name" value="TGS"/>
</dbReference>
<dbReference type="InterPro" id="IPR012676">
    <property type="entry name" value="TGS-like"/>
</dbReference>
<dbReference type="InterPro" id="IPR002320">
    <property type="entry name" value="Thr-tRNA-ligase_IIa"/>
</dbReference>
<dbReference type="InterPro" id="IPR018163">
    <property type="entry name" value="Thr/Ala-tRNA-synth_IIc_edit"/>
</dbReference>
<dbReference type="InterPro" id="IPR047246">
    <property type="entry name" value="ThrRS_anticodon"/>
</dbReference>
<dbReference type="InterPro" id="IPR033728">
    <property type="entry name" value="ThrRS_core"/>
</dbReference>
<dbReference type="InterPro" id="IPR012947">
    <property type="entry name" value="tRNA_SAD"/>
</dbReference>
<dbReference type="NCBIfam" id="TIGR00418">
    <property type="entry name" value="thrS"/>
    <property type="match status" value="1"/>
</dbReference>
<dbReference type="PANTHER" id="PTHR11451:SF44">
    <property type="entry name" value="THREONINE--TRNA LIGASE, CHLOROPLASTIC_MITOCHONDRIAL 2"/>
    <property type="match status" value="1"/>
</dbReference>
<dbReference type="PANTHER" id="PTHR11451">
    <property type="entry name" value="THREONINE-TRNA LIGASE"/>
    <property type="match status" value="1"/>
</dbReference>
<dbReference type="Pfam" id="PF03129">
    <property type="entry name" value="HGTP_anticodon"/>
    <property type="match status" value="1"/>
</dbReference>
<dbReference type="Pfam" id="PF02824">
    <property type="entry name" value="TGS"/>
    <property type="match status" value="1"/>
</dbReference>
<dbReference type="Pfam" id="PF00587">
    <property type="entry name" value="tRNA-synt_2b"/>
    <property type="match status" value="1"/>
</dbReference>
<dbReference type="Pfam" id="PF07973">
    <property type="entry name" value="tRNA_SAD"/>
    <property type="match status" value="1"/>
</dbReference>
<dbReference type="PRINTS" id="PR01047">
    <property type="entry name" value="TRNASYNTHTHR"/>
</dbReference>
<dbReference type="SMART" id="SM00863">
    <property type="entry name" value="tRNA_SAD"/>
    <property type="match status" value="1"/>
</dbReference>
<dbReference type="SUPFAM" id="SSF52954">
    <property type="entry name" value="Class II aaRS ABD-related"/>
    <property type="match status" value="1"/>
</dbReference>
<dbReference type="SUPFAM" id="SSF55681">
    <property type="entry name" value="Class II aaRS and biotin synthetases"/>
    <property type="match status" value="1"/>
</dbReference>
<dbReference type="SUPFAM" id="SSF81271">
    <property type="entry name" value="TGS-like"/>
    <property type="match status" value="1"/>
</dbReference>
<dbReference type="SUPFAM" id="SSF55186">
    <property type="entry name" value="ThrRS/AlaRS common domain"/>
    <property type="match status" value="1"/>
</dbReference>
<dbReference type="PROSITE" id="PS50862">
    <property type="entry name" value="AA_TRNA_LIGASE_II"/>
    <property type="match status" value="1"/>
</dbReference>
<dbReference type="PROSITE" id="PS51880">
    <property type="entry name" value="TGS"/>
    <property type="match status" value="1"/>
</dbReference>
<proteinExistence type="inferred from homology"/>
<reference key="1">
    <citation type="journal article" date="2010" name="J. Bacteriol.">
        <title>The genetic basis of laboratory adaptation in Caulobacter crescentus.</title>
        <authorList>
            <person name="Marks M.E."/>
            <person name="Castro-Rojas C.M."/>
            <person name="Teiling C."/>
            <person name="Du L."/>
            <person name="Kapatral V."/>
            <person name="Walunas T.L."/>
            <person name="Crosson S."/>
        </authorList>
    </citation>
    <scope>NUCLEOTIDE SEQUENCE [LARGE SCALE GENOMIC DNA]</scope>
    <source>
        <strain>NA1000 / CB15N</strain>
    </source>
</reference>
<comment type="function">
    <text evidence="1">Catalyzes the attachment of threonine to tRNA(Thr) in a two-step reaction: L-threonine is first activated by ATP to form Thr-AMP and then transferred to the acceptor end of tRNA(Thr). Also edits incorrectly charged L-seryl-tRNA(Thr).</text>
</comment>
<comment type="catalytic activity">
    <reaction evidence="1">
        <text>tRNA(Thr) + L-threonine + ATP = L-threonyl-tRNA(Thr) + AMP + diphosphate + H(+)</text>
        <dbReference type="Rhea" id="RHEA:24624"/>
        <dbReference type="Rhea" id="RHEA-COMP:9670"/>
        <dbReference type="Rhea" id="RHEA-COMP:9704"/>
        <dbReference type="ChEBI" id="CHEBI:15378"/>
        <dbReference type="ChEBI" id="CHEBI:30616"/>
        <dbReference type="ChEBI" id="CHEBI:33019"/>
        <dbReference type="ChEBI" id="CHEBI:57926"/>
        <dbReference type="ChEBI" id="CHEBI:78442"/>
        <dbReference type="ChEBI" id="CHEBI:78534"/>
        <dbReference type="ChEBI" id="CHEBI:456215"/>
        <dbReference type="EC" id="6.1.1.3"/>
    </reaction>
</comment>
<comment type="cofactor">
    <cofactor evidence="1">
        <name>Zn(2+)</name>
        <dbReference type="ChEBI" id="CHEBI:29105"/>
    </cofactor>
    <text evidence="1">Binds 1 zinc ion per subunit.</text>
</comment>
<comment type="subunit">
    <text evidence="1">Homodimer.</text>
</comment>
<comment type="subcellular location">
    <subcellularLocation>
        <location evidence="1">Cytoplasm</location>
    </subcellularLocation>
</comment>
<comment type="similarity">
    <text evidence="1">Belongs to the class-II aminoacyl-tRNA synthetase family.</text>
</comment>
<keyword id="KW-0030">Aminoacyl-tRNA synthetase</keyword>
<keyword id="KW-0067">ATP-binding</keyword>
<keyword id="KW-0963">Cytoplasm</keyword>
<keyword id="KW-0436">Ligase</keyword>
<keyword id="KW-0479">Metal-binding</keyword>
<keyword id="KW-0547">Nucleotide-binding</keyword>
<keyword id="KW-0648">Protein biosynthesis</keyword>
<keyword id="KW-1185">Reference proteome</keyword>
<keyword id="KW-0694">RNA-binding</keyword>
<keyword id="KW-0820">tRNA-binding</keyword>
<keyword id="KW-0862">Zinc</keyword>
<gene>
    <name evidence="1" type="primary">thrS</name>
    <name type="ordered locus">CCNA_00496</name>
</gene>
<sequence>MIDLVFPDGSSRQYPDGATGRDVAAAISKSLEKKALLIKLDGQVLDLDRRLTPDLLTGERKFEILTREAPEALDTIRHDTAHVLAEAVQELFPGTQVTIGPNVEDGFYYDFARDEPFSLDDLEKIEKRMKEIVDRDEKITREVWDRNEAIAHFDGIGEQYKAQIIRDLPDTDTITVYRQGNWKDLCRGPHLPSTKHVGKAFKLTKLAGAYWRGDQNNAQLQRIYGTAWASEADLEAHLKRIEEAEKRDHRKLGKTMDLFHIQEEGKGMVFWHPKGWALYRVLEDYMRRRLDAAGYKEVKTPQILDRSLWEKSGHAEKFGHAMFMCESAEGEVLAVKPMNCPGHIQIFNVGQKSYRELPLRMAEFGACHRYEPSGAMHGIMRVRAFTQDDAHIFCREEQVTEESARFIELLRSVYNDLGMTLADTKFSTRPELRAGTDETWDKAEAALAAAAEAAGETLTLQPGEGAFYGPKLEFSLKDAIGRVWQCGTLQLDFVLPERLDAEYVSEDGSKKRPVMLHRAILGSFERFIGILLENFAGALPVWLAPTQVVVATITSDADDYAREVVEKLTKLGMRAELDLRNEKINYKIREHSLAKVPVIAVVGRKEAETGQLALRRLGGEGQSVLSLEEALRVLKSDATPPDVARALAVQEAVTA</sequence>
<evidence type="ECO:0000255" key="1">
    <source>
        <dbReference type="HAMAP-Rule" id="MF_00184"/>
    </source>
</evidence>
<evidence type="ECO:0000255" key="2">
    <source>
        <dbReference type="PROSITE-ProRule" id="PRU01228"/>
    </source>
</evidence>
<protein>
    <recommendedName>
        <fullName evidence="1">Threonine--tRNA ligase</fullName>
        <ecNumber evidence="1">6.1.1.3</ecNumber>
    </recommendedName>
    <alternativeName>
        <fullName evidence="1">Threonyl-tRNA synthetase</fullName>
        <shortName evidence="1">ThrRS</shortName>
    </alternativeName>
</protein>
<name>SYT_CAUVN</name>
<organism>
    <name type="scientific">Caulobacter vibrioides (strain NA1000 / CB15N)</name>
    <name type="common">Caulobacter crescentus</name>
    <dbReference type="NCBI Taxonomy" id="565050"/>
    <lineage>
        <taxon>Bacteria</taxon>
        <taxon>Pseudomonadati</taxon>
        <taxon>Pseudomonadota</taxon>
        <taxon>Alphaproteobacteria</taxon>
        <taxon>Caulobacterales</taxon>
        <taxon>Caulobacteraceae</taxon>
        <taxon>Caulobacter</taxon>
    </lineage>
</organism>
<accession>B8GZS7</accession>
<feature type="chain" id="PRO_1000199536" description="Threonine--tRNA ligase">
    <location>
        <begin position="1"/>
        <end position="655"/>
    </location>
</feature>
<feature type="domain" description="TGS" evidence="2">
    <location>
        <begin position="1"/>
        <end position="66"/>
    </location>
</feature>
<feature type="region of interest" description="Catalytic" evidence="1">
    <location>
        <begin position="248"/>
        <end position="540"/>
    </location>
</feature>
<feature type="binding site" evidence="1">
    <location>
        <position position="340"/>
    </location>
    <ligand>
        <name>Zn(2+)</name>
        <dbReference type="ChEBI" id="CHEBI:29105"/>
    </ligand>
</feature>
<feature type="binding site" evidence="1">
    <location>
        <position position="391"/>
    </location>
    <ligand>
        <name>Zn(2+)</name>
        <dbReference type="ChEBI" id="CHEBI:29105"/>
    </ligand>
</feature>
<feature type="binding site" evidence="1">
    <location>
        <position position="517"/>
    </location>
    <ligand>
        <name>Zn(2+)</name>
        <dbReference type="ChEBI" id="CHEBI:29105"/>
    </ligand>
</feature>